<sequence>MNIFPAIDLINGKCVRLEKGDFNKTTTYELEPKDVAKAYQQAGAEFIHVVDLDGAKKGQTCQFETIQKIRENCNMTLQVGGGVKDFETIEKLLEIGVDRVVIGSLAVKDIALTKKFFEKYGAEKIVLALDVFIKNGVPYIATHGWQESSTTTLDEILQTYLGDGLEYVLCTDISRDGMLQGPNFELYRIYSSIYPDVQFMASGGVGSLEDLEILKEQNTYGVIIGKALYENKFTLQEALEC</sequence>
<keyword id="KW-0028">Amino-acid biosynthesis</keyword>
<keyword id="KW-0963">Cytoplasm</keyword>
<keyword id="KW-0368">Histidine biosynthesis</keyword>
<keyword id="KW-0413">Isomerase</keyword>
<evidence type="ECO:0000255" key="1">
    <source>
        <dbReference type="HAMAP-Rule" id="MF_01014"/>
    </source>
</evidence>
<feature type="chain" id="PRO_1000135119" description="1-(5-phosphoribosyl)-5-[(5-phosphoribosylamino)methylideneamino] imidazole-4-carboxamide isomerase">
    <location>
        <begin position="1"/>
        <end position="241"/>
    </location>
</feature>
<feature type="active site" description="Proton acceptor" evidence="1">
    <location>
        <position position="8"/>
    </location>
</feature>
<feature type="active site" description="Proton donor" evidence="1">
    <location>
        <position position="130"/>
    </location>
</feature>
<dbReference type="EC" id="5.3.1.16" evidence="1"/>
<dbReference type="EMBL" id="CP000937">
    <property type="protein sequence ID" value="ABZ86284.1"/>
    <property type="molecule type" value="Genomic_DNA"/>
</dbReference>
<dbReference type="SMR" id="B0TY42"/>
<dbReference type="KEGG" id="fph:Fphi_0064"/>
<dbReference type="eggNOG" id="COG0106">
    <property type="taxonomic scope" value="Bacteria"/>
</dbReference>
<dbReference type="HOGENOM" id="CLU_048577_1_2_6"/>
<dbReference type="UniPathway" id="UPA00031">
    <property type="reaction ID" value="UER00009"/>
</dbReference>
<dbReference type="GO" id="GO:0005737">
    <property type="term" value="C:cytoplasm"/>
    <property type="evidence" value="ECO:0007669"/>
    <property type="project" value="UniProtKB-SubCell"/>
</dbReference>
<dbReference type="GO" id="GO:0003949">
    <property type="term" value="F:1-(5-phosphoribosyl)-5-[(5-phosphoribosylamino)methylideneamino]imidazole-4-carboxamide isomerase activity"/>
    <property type="evidence" value="ECO:0007669"/>
    <property type="project" value="UniProtKB-UniRule"/>
</dbReference>
<dbReference type="GO" id="GO:0000105">
    <property type="term" value="P:L-histidine biosynthetic process"/>
    <property type="evidence" value="ECO:0007669"/>
    <property type="project" value="UniProtKB-UniRule"/>
</dbReference>
<dbReference type="GO" id="GO:0000162">
    <property type="term" value="P:L-tryptophan biosynthetic process"/>
    <property type="evidence" value="ECO:0007669"/>
    <property type="project" value="TreeGrafter"/>
</dbReference>
<dbReference type="CDD" id="cd04732">
    <property type="entry name" value="HisA"/>
    <property type="match status" value="1"/>
</dbReference>
<dbReference type="FunFam" id="3.20.20.70:FF:000009">
    <property type="entry name" value="1-(5-phosphoribosyl)-5-[(5-phosphoribosylamino)methylideneamino] imidazole-4-carboxamide isomerase"/>
    <property type="match status" value="1"/>
</dbReference>
<dbReference type="Gene3D" id="3.20.20.70">
    <property type="entry name" value="Aldolase class I"/>
    <property type="match status" value="1"/>
</dbReference>
<dbReference type="HAMAP" id="MF_01014">
    <property type="entry name" value="HisA"/>
    <property type="match status" value="1"/>
</dbReference>
<dbReference type="InterPro" id="IPR013785">
    <property type="entry name" value="Aldolase_TIM"/>
</dbReference>
<dbReference type="InterPro" id="IPR006062">
    <property type="entry name" value="His_biosynth"/>
</dbReference>
<dbReference type="InterPro" id="IPR006063">
    <property type="entry name" value="HisA_bact_arch"/>
</dbReference>
<dbReference type="InterPro" id="IPR044524">
    <property type="entry name" value="Isoase_HisA-like"/>
</dbReference>
<dbReference type="InterPro" id="IPR023016">
    <property type="entry name" value="Isoase_HisA-like_bact"/>
</dbReference>
<dbReference type="InterPro" id="IPR011060">
    <property type="entry name" value="RibuloseP-bd_barrel"/>
</dbReference>
<dbReference type="NCBIfam" id="TIGR00007">
    <property type="entry name" value="1-(5-phosphoribosyl)-5-[(5-phosphoribosylamino)methylideneamino]imidazole-4-carboxamide isomerase"/>
    <property type="match status" value="1"/>
</dbReference>
<dbReference type="PANTHER" id="PTHR43090">
    <property type="entry name" value="1-(5-PHOSPHORIBOSYL)-5-[(5-PHOSPHORIBOSYLAMINO)METHYLIDENEAMINO] IMIDAZOLE-4-CARBOXAMIDE ISOMERASE"/>
    <property type="match status" value="1"/>
</dbReference>
<dbReference type="PANTHER" id="PTHR43090:SF2">
    <property type="entry name" value="1-(5-PHOSPHORIBOSYL)-5-[(5-PHOSPHORIBOSYLAMINO)METHYLIDENEAMINO] IMIDAZOLE-4-CARBOXAMIDE ISOMERASE"/>
    <property type="match status" value="1"/>
</dbReference>
<dbReference type="Pfam" id="PF00977">
    <property type="entry name" value="His_biosynth"/>
    <property type="match status" value="1"/>
</dbReference>
<dbReference type="SUPFAM" id="SSF51366">
    <property type="entry name" value="Ribulose-phoshate binding barrel"/>
    <property type="match status" value="1"/>
</dbReference>
<reference key="1">
    <citation type="submission" date="2007-12" db="EMBL/GenBank/DDBJ databases">
        <title>Complete sequence of chromosome of Francisella philomiragia subsp. philomiragia ATCC 25017.</title>
        <authorList>
            <consortium name="US DOE Joint Genome Institute"/>
            <person name="Copeland A."/>
            <person name="Lucas S."/>
            <person name="Lapidus A."/>
            <person name="Barry K."/>
            <person name="Detter J.C."/>
            <person name="Glavina del Rio T."/>
            <person name="Hammon N."/>
            <person name="Israni S."/>
            <person name="Dalin E."/>
            <person name="Tice H."/>
            <person name="Pitluck S."/>
            <person name="Chain P."/>
            <person name="Malfatti S."/>
            <person name="Shin M."/>
            <person name="Vergez L."/>
            <person name="Schmutz J."/>
            <person name="Larimer F."/>
            <person name="Land M."/>
            <person name="Hauser L."/>
            <person name="Richardson P."/>
        </authorList>
    </citation>
    <scope>NUCLEOTIDE SEQUENCE [LARGE SCALE GENOMIC DNA]</scope>
    <source>
        <strain>ATCC 25017 / CCUG 19701 / FSC 153 / O#319-036</strain>
    </source>
</reference>
<comment type="catalytic activity">
    <reaction evidence="1">
        <text>1-(5-phospho-beta-D-ribosyl)-5-[(5-phospho-beta-D-ribosylamino)methylideneamino]imidazole-4-carboxamide = 5-[(5-phospho-1-deoxy-D-ribulos-1-ylimino)methylamino]-1-(5-phospho-beta-D-ribosyl)imidazole-4-carboxamide</text>
        <dbReference type="Rhea" id="RHEA:15469"/>
        <dbReference type="ChEBI" id="CHEBI:58435"/>
        <dbReference type="ChEBI" id="CHEBI:58525"/>
        <dbReference type="EC" id="5.3.1.16"/>
    </reaction>
</comment>
<comment type="pathway">
    <text evidence="1">Amino-acid biosynthesis; L-histidine biosynthesis; L-histidine from 5-phospho-alpha-D-ribose 1-diphosphate: step 4/9.</text>
</comment>
<comment type="subcellular location">
    <subcellularLocation>
        <location evidence="1">Cytoplasm</location>
    </subcellularLocation>
</comment>
<comment type="similarity">
    <text evidence="1">Belongs to the HisA/HisF family.</text>
</comment>
<accession>B0TY42</accession>
<proteinExistence type="inferred from homology"/>
<protein>
    <recommendedName>
        <fullName evidence="1">1-(5-phosphoribosyl)-5-[(5-phosphoribosylamino)methylideneamino] imidazole-4-carboxamide isomerase</fullName>
        <ecNumber evidence="1">5.3.1.16</ecNumber>
    </recommendedName>
    <alternativeName>
        <fullName evidence="1">Phosphoribosylformimino-5-aminoimidazole carboxamide ribotide isomerase</fullName>
    </alternativeName>
</protein>
<organism>
    <name type="scientific">Francisella philomiragia subsp. philomiragia (strain ATCC 25017 / CCUG 19701 / FSC 153 / O#319-036)</name>
    <dbReference type="NCBI Taxonomy" id="484022"/>
    <lineage>
        <taxon>Bacteria</taxon>
        <taxon>Pseudomonadati</taxon>
        <taxon>Pseudomonadota</taxon>
        <taxon>Gammaproteobacteria</taxon>
        <taxon>Thiotrichales</taxon>
        <taxon>Francisellaceae</taxon>
        <taxon>Francisella</taxon>
    </lineage>
</organism>
<gene>
    <name evidence="1" type="primary">hisA</name>
    <name type="ordered locus">Fphi_0064</name>
</gene>
<name>HIS4_FRAP2</name>